<dbReference type="EC" id="4.2.1.33" evidence="1"/>
<dbReference type="EMBL" id="CP000390">
    <property type="protein sequence ID" value="ABG64819.1"/>
    <property type="molecule type" value="Genomic_DNA"/>
</dbReference>
<dbReference type="SMR" id="Q11CQ6"/>
<dbReference type="STRING" id="266779.Meso_3448"/>
<dbReference type="KEGG" id="mes:Meso_3448"/>
<dbReference type="eggNOG" id="COG0065">
    <property type="taxonomic scope" value="Bacteria"/>
</dbReference>
<dbReference type="HOGENOM" id="CLU_006714_3_4_5"/>
<dbReference type="OrthoDB" id="9802769at2"/>
<dbReference type="UniPathway" id="UPA00048">
    <property type="reaction ID" value="UER00071"/>
</dbReference>
<dbReference type="GO" id="GO:0003861">
    <property type="term" value="F:3-isopropylmalate dehydratase activity"/>
    <property type="evidence" value="ECO:0007669"/>
    <property type="project" value="UniProtKB-UniRule"/>
</dbReference>
<dbReference type="GO" id="GO:0051539">
    <property type="term" value="F:4 iron, 4 sulfur cluster binding"/>
    <property type="evidence" value="ECO:0007669"/>
    <property type="project" value="UniProtKB-KW"/>
</dbReference>
<dbReference type="GO" id="GO:0046872">
    <property type="term" value="F:metal ion binding"/>
    <property type="evidence" value="ECO:0007669"/>
    <property type="project" value="UniProtKB-KW"/>
</dbReference>
<dbReference type="GO" id="GO:0009098">
    <property type="term" value="P:L-leucine biosynthetic process"/>
    <property type="evidence" value="ECO:0007669"/>
    <property type="project" value="UniProtKB-UniRule"/>
</dbReference>
<dbReference type="CDD" id="cd01583">
    <property type="entry name" value="IPMI"/>
    <property type="match status" value="1"/>
</dbReference>
<dbReference type="FunFam" id="3.30.499.10:FF:000006">
    <property type="entry name" value="3-isopropylmalate dehydratase large subunit"/>
    <property type="match status" value="1"/>
</dbReference>
<dbReference type="FunFam" id="3.30.499.10:FF:000007">
    <property type="entry name" value="3-isopropylmalate dehydratase large subunit"/>
    <property type="match status" value="1"/>
</dbReference>
<dbReference type="Gene3D" id="3.30.499.10">
    <property type="entry name" value="Aconitase, domain 3"/>
    <property type="match status" value="2"/>
</dbReference>
<dbReference type="HAMAP" id="MF_01026">
    <property type="entry name" value="LeuC_type1"/>
    <property type="match status" value="1"/>
</dbReference>
<dbReference type="InterPro" id="IPR004430">
    <property type="entry name" value="3-IsopropMal_deHydase_lsu"/>
</dbReference>
<dbReference type="InterPro" id="IPR015931">
    <property type="entry name" value="Acnase/IPM_dHydase_lsu_aba_1/3"/>
</dbReference>
<dbReference type="InterPro" id="IPR001030">
    <property type="entry name" value="Acoase/IPM_deHydtase_lsu_aba"/>
</dbReference>
<dbReference type="InterPro" id="IPR018136">
    <property type="entry name" value="Aconitase_4Fe-4S_BS"/>
</dbReference>
<dbReference type="InterPro" id="IPR036008">
    <property type="entry name" value="Aconitase_4Fe-4S_dom"/>
</dbReference>
<dbReference type="InterPro" id="IPR050067">
    <property type="entry name" value="IPM_dehydratase_rel_enz"/>
</dbReference>
<dbReference type="InterPro" id="IPR033941">
    <property type="entry name" value="IPMI_cat"/>
</dbReference>
<dbReference type="NCBIfam" id="TIGR00170">
    <property type="entry name" value="leuC"/>
    <property type="match status" value="1"/>
</dbReference>
<dbReference type="NCBIfam" id="NF004016">
    <property type="entry name" value="PRK05478.1"/>
    <property type="match status" value="1"/>
</dbReference>
<dbReference type="NCBIfam" id="NF009116">
    <property type="entry name" value="PRK12466.1"/>
    <property type="match status" value="1"/>
</dbReference>
<dbReference type="PANTHER" id="PTHR43822:SF9">
    <property type="entry name" value="3-ISOPROPYLMALATE DEHYDRATASE"/>
    <property type="match status" value="1"/>
</dbReference>
<dbReference type="PANTHER" id="PTHR43822">
    <property type="entry name" value="HOMOACONITASE, MITOCHONDRIAL-RELATED"/>
    <property type="match status" value="1"/>
</dbReference>
<dbReference type="Pfam" id="PF00330">
    <property type="entry name" value="Aconitase"/>
    <property type="match status" value="1"/>
</dbReference>
<dbReference type="PRINTS" id="PR00415">
    <property type="entry name" value="ACONITASE"/>
</dbReference>
<dbReference type="SUPFAM" id="SSF53732">
    <property type="entry name" value="Aconitase iron-sulfur domain"/>
    <property type="match status" value="1"/>
</dbReference>
<dbReference type="PROSITE" id="PS00450">
    <property type="entry name" value="ACONITASE_1"/>
    <property type="match status" value="1"/>
</dbReference>
<dbReference type="PROSITE" id="PS01244">
    <property type="entry name" value="ACONITASE_2"/>
    <property type="match status" value="1"/>
</dbReference>
<proteinExistence type="inferred from homology"/>
<evidence type="ECO:0000255" key="1">
    <source>
        <dbReference type="HAMAP-Rule" id="MF_01026"/>
    </source>
</evidence>
<sequence length="469" mass="51067">MTAPRTLYDKIFDDHLVDRQDDGTCLLYIDRHLVHEVTSPQAFEGLRMAGRAVRHPEKTLAVVDHNVPTSPDRKFGIKNEESRIQVEALAKNAVDFGIEYYNEADRRQGIVHIVGPEQGFTLPGMTIVCGDSHTSTHGAFGALAHGIGTSEVEHVLATQTLIQRKAKNMLVQVDGKLPDGVTAKDIILAIIGEIGTAGGTGHVIEYAGEAIRSLSMEGRMTVCNMSIEGGARAGMIAPDETTYAYIKDRPRAPKGAAWEMARAYWETLHTDEGAHFDRVVKLDAANLPPIVTWGSSPEDVVSVTGYVPNADEIQDETKRLSKKRALEYMGLTAGTKITDIALDRVFIGSCTNGRIEDLRAAAKIAEGRKVHPRINAMIVPGSGLVKAQAEAEGLDKIFIEAGFDWREPGCSMCLAMNDDRLKPGERCASTSNRNFEGRQGFKGRTHLVSPAMAAAAAIAGHFVDIREWK</sequence>
<comment type="function">
    <text evidence="1">Catalyzes the isomerization between 2-isopropylmalate and 3-isopropylmalate, via the formation of 2-isopropylmaleate.</text>
</comment>
<comment type="catalytic activity">
    <reaction evidence="1">
        <text>(2R,3S)-3-isopropylmalate = (2S)-2-isopropylmalate</text>
        <dbReference type="Rhea" id="RHEA:32287"/>
        <dbReference type="ChEBI" id="CHEBI:1178"/>
        <dbReference type="ChEBI" id="CHEBI:35121"/>
        <dbReference type="EC" id="4.2.1.33"/>
    </reaction>
</comment>
<comment type="cofactor">
    <cofactor evidence="1">
        <name>[4Fe-4S] cluster</name>
        <dbReference type="ChEBI" id="CHEBI:49883"/>
    </cofactor>
    <text evidence="1">Binds 1 [4Fe-4S] cluster per subunit.</text>
</comment>
<comment type="pathway">
    <text evidence="1">Amino-acid biosynthesis; L-leucine biosynthesis; L-leucine from 3-methyl-2-oxobutanoate: step 2/4.</text>
</comment>
<comment type="subunit">
    <text evidence="1">Heterodimer of LeuC and LeuD.</text>
</comment>
<comment type="similarity">
    <text evidence="1">Belongs to the aconitase/IPM isomerase family. LeuC type 1 subfamily.</text>
</comment>
<keyword id="KW-0004">4Fe-4S</keyword>
<keyword id="KW-0028">Amino-acid biosynthesis</keyword>
<keyword id="KW-0100">Branched-chain amino acid biosynthesis</keyword>
<keyword id="KW-0408">Iron</keyword>
<keyword id="KW-0411">Iron-sulfur</keyword>
<keyword id="KW-0432">Leucine biosynthesis</keyword>
<keyword id="KW-0456">Lyase</keyword>
<keyword id="KW-0479">Metal-binding</keyword>
<reference key="1">
    <citation type="submission" date="2006-06" db="EMBL/GenBank/DDBJ databases">
        <title>Complete sequence of chromosome of Mesorhizobium sp. BNC1.</title>
        <authorList>
            <consortium name="US DOE Joint Genome Institute"/>
            <person name="Copeland A."/>
            <person name="Lucas S."/>
            <person name="Lapidus A."/>
            <person name="Barry K."/>
            <person name="Detter J.C."/>
            <person name="Glavina del Rio T."/>
            <person name="Hammon N."/>
            <person name="Israni S."/>
            <person name="Dalin E."/>
            <person name="Tice H."/>
            <person name="Pitluck S."/>
            <person name="Chertkov O."/>
            <person name="Brettin T."/>
            <person name="Bruce D."/>
            <person name="Han C."/>
            <person name="Tapia R."/>
            <person name="Gilna P."/>
            <person name="Schmutz J."/>
            <person name="Larimer F."/>
            <person name="Land M."/>
            <person name="Hauser L."/>
            <person name="Kyrpides N."/>
            <person name="Mikhailova N."/>
            <person name="Richardson P."/>
        </authorList>
    </citation>
    <scope>NUCLEOTIDE SEQUENCE [LARGE SCALE GENOMIC DNA]</scope>
    <source>
        <strain>BNC1</strain>
    </source>
</reference>
<feature type="chain" id="PRO_1000063570" description="3-isopropylmalate dehydratase large subunit">
    <location>
        <begin position="1"/>
        <end position="469"/>
    </location>
</feature>
<feature type="binding site" evidence="1">
    <location>
        <position position="350"/>
    </location>
    <ligand>
        <name>[4Fe-4S] cluster</name>
        <dbReference type="ChEBI" id="CHEBI:49883"/>
    </ligand>
</feature>
<feature type="binding site" evidence="1">
    <location>
        <position position="410"/>
    </location>
    <ligand>
        <name>[4Fe-4S] cluster</name>
        <dbReference type="ChEBI" id="CHEBI:49883"/>
    </ligand>
</feature>
<feature type="binding site" evidence="1">
    <location>
        <position position="413"/>
    </location>
    <ligand>
        <name>[4Fe-4S] cluster</name>
        <dbReference type="ChEBI" id="CHEBI:49883"/>
    </ligand>
</feature>
<accession>Q11CQ6</accession>
<name>LEUC_CHESB</name>
<organism>
    <name type="scientific">Chelativorans sp. (strain BNC1)</name>
    <dbReference type="NCBI Taxonomy" id="266779"/>
    <lineage>
        <taxon>Bacteria</taxon>
        <taxon>Pseudomonadati</taxon>
        <taxon>Pseudomonadota</taxon>
        <taxon>Alphaproteobacteria</taxon>
        <taxon>Hyphomicrobiales</taxon>
        <taxon>Phyllobacteriaceae</taxon>
        <taxon>Chelativorans</taxon>
    </lineage>
</organism>
<gene>
    <name evidence="1" type="primary">leuC</name>
    <name type="ordered locus">Meso_3448</name>
</gene>
<protein>
    <recommendedName>
        <fullName evidence="1">3-isopropylmalate dehydratase large subunit</fullName>
        <ecNumber evidence="1">4.2.1.33</ecNumber>
    </recommendedName>
    <alternativeName>
        <fullName evidence="1">Alpha-IPM isomerase</fullName>
        <shortName evidence="1">IPMI</shortName>
    </alternativeName>
    <alternativeName>
        <fullName evidence="1">Isopropylmalate isomerase</fullName>
    </alternativeName>
</protein>